<sequence>MSDDVALPLQFTEAAAKKVKVLIADENNPELKLRVYITGGGCSGFQYGFTFDDQINDGDMTIEKQGVALVVDPMSLQYLVGGAVDYTEGLEGSRFVVTNPNAKSTCGCGSSFSI</sequence>
<protein>
    <recommendedName>
        <fullName evidence="1">Iron-sulfur cluster insertion protein ErpA</fullName>
    </recommendedName>
</protein>
<proteinExistence type="inferred from homology"/>
<keyword id="KW-0408">Iron</keyword>
<keyword id="KW-0411">Iron-sulfur</keyword>
<keyword id="KW-0479">Metal-binding</keyword>
<accession>A4W6Q3</accession>
<name>ERPA_ENT38</name>
<evidence type="ECO:0000255" key="1">
    <source>
        <dbReference type="HAMAP-Rule" id="MF_01380"/>
    </source>
</evidence>
<gene>
    <name evidence="1" type="primary">erpA</name>
    <name type="ordered locus">Ent638_0696</name>
</gene>
<organism>
    <name type="scientific">Enterobacter sp. (strain 638)</name>
    <dbReference type="NCBI Taxonomy" id="399742"/>
    <lineage>
        <taxon>Bacteria</taxon>
        <taxon>Pseudomonadati</taxon>
        <taxon>Pseudomonadota</taxon>
        <taxon>Gammaproteobacteria</taxon>
        <taxon>Enterobacterales</taxon>
        <taxon>Enterobacteriaceae</taxon>
        <taxon>Enterobacter</taxon>
    </lineage>
</organism>
<comment type="function">
    <text evidence="1">Required for insertion of 4Fe-4S clusters for at least IspG.</text>
</comment>
<comment type="cofactor">
    <cofactor evidence="1">
        <name>iron-sulfur cluster</name>
        <dbReference type="ChEBI" id="CHEBI:30408"/>
    </cofactor>
    <text evidence="1">Binds 1 iron-sulfur cluster per subunit.</text>
</comment>
<comment type="subunit">
    <text evidence="1">Homodimer.</text>
</comment>
<comment type="similarity">
    <text evidence="1">Belongs to the HesB/IscA family.</text>
</comment>
<feature type="chain" id="PRO_1000144917" description="Iron-sulfur cluster insertion protein ErpA">
    <location>
        <begin position="1"/>
        <end position="114"/>
    </location>
</feature>
<feature type="binding site" evidence="1">
    <location>
        <position position="42"/>
    </location>
    <ligand>
        <name>iron-sulfur cluster</name>
        <dbReference type="ChEBI" id="CHEBI:30408"/>
    </ligand>
</feature>
<feature type="binding site" evidence="1">
    <location>
        <position position="106"/>
    </location>
    <ligand>
        <name>iron-sulfur cluster</name>
        <dbReference type="ChEBI" id="CHEBI:30408"/>
    </ligand>
</feature>
<feature type="binding site" evidence="1">
    <location>
        <position position="108"/>
    </location>
    <ligand>
        <name>iron-sulfur cluster</name>
        <dbReference type="ChEBI" id="CHEBI:30408"/>
    </ligand>
</feature>
<dbReference type="EMBL" id="CP000653">
    <property type="protein sequence ID" value="ABP59383.1"/>
    <property type="molecule type" value="Genomic_DNA"/>
</dbReference>
<dbReference type="RefSeq" id="WP_012016104.1">
    <property type="nucleotide sequence ID" value="NC_009436.1"/>
</dbReference>
<dbReference type="SMR" id="A4W6Q3"/>
<dbReference type="STRING" id="399742.Ent638_0696"/>
<dbReference type="KEGG" id="ent:Ent638_0696"/>
<dbReference type="eggNOG" id="COG0316">
    <property type="taxonomic scope" value="Bacteria"/>
</dbReference>
<dbReference type="HOGENOM" id="CLU_069054_5_3_6"/>
<dbReference type="OrthoDB" id="9801228at2"/>
<dbReference type="Proteomes" id="UP000000230">
    <property type="component" value="Chromosome"/>
</dbReference>
<dbReference type="GO" id="GO:0005829">
    <property type="term" value="C:cytosol"/>
    <property type="evidence" value="ECO:0007669"/>
    <property type="project" value="TreeGrafter"/>
</dbReference>
<dbReference type="GO" id="GO:0051537">
    <property type="term" value="F:2 iron, 2 sulfur cluster binding"/>
    <property type="evidence" value="ECO:0007669"/>
    <property type="project" value="TreeGrafter"/>
</dbReference>
<dbReference type="GO" id="GO:0051539">
    <property type="term" value="F:4 iron, 4 sulfur cluster binding"/>
    <property type="evidence" value="ECO:0007669"/>
    <property type="project" value="TreeGrafter"/>
</dbReference>
<dbReference type="GO" id="GO:0005506">
    <property type="term" value="F:iron ion binding"/>
    <property type="evidence" value="ECO:0007669"/>
    <property type="project" value="UniProtKB-UniRule"/>
</dbReference>
<dbReference type="GO" id="GO:0016226">
    <property type="term" value="P:iron-sulfur cluster assembly"/>
    <property type="evidence" value="ECO:0007669"/>
    <property type="project" value="UniProtKB-UniRule"/>
</dbReference>
<dbReference type="FunFam" id="2.60.300.12:FF:000002">
    <property type="entry name" value="Iron-sulfur cluster insertion protein ErpA"/>
    <property type="match status" value="1"/>
</dbReference>
<dbReference type="Gene3D" id="2.60.300.12">
    <property type="entry name" value="HesB-like domain"/>
    <property type="match status" value="1"/>
</dbReference>
<dbReference type="HAMAP" id="MF_01380">
    <property type="entry name" value="Fe_S_insert_ErpA"/>
    <property type="match status" value="1"/>
</dbReference>
<dbReference type="InterPro" id="IPR000361">
    <property type="entry name" value="FeS_biogenesis"/>
</dbReference>
<dbReference type="InterPro" id="IPR016092">
    <property type="entry name" value="FeS_cluster_insertion"/>
</dbReference>
<dbReference type="InterPro" id="IPR017870">
    <property type="entry name" value="FeS_cluster_insertion_CS"/>
</dbReference>
<dbReference type="InterPro" id="IPR023063">
    <property type="entry name" value="FeS_cluster_insertion_RrpA"/>
</dbReference>
<dbReference type="InterPro" id="IPR035903">
    <property type="entry name" value="HesB-like_dom_sf"/>
</dbReference>
<dbReference type="NCBIfam" id="TIGR00049">
    <property type="entry name" value="iron-sulfur cluster assembly accessory protein"/>
    <property type="match status" value="1"/>
</dbReference>
<dbReference type="NCBIfam" id="NF010147">
    <property type="entry name" value="PRK13623.1"/>
    <property type="match status" value="1"/>
</dbReference>
<dbReference type="PANTHER" id="PTHR43011">
    <property type="entry name" value="IRON-SULFUR CLUSTER ASSEMBLY 2 HOMOLOG, MITOCHONDRIAL"/>
    <property type="match status" value="1"/>
</dbReference>
<dbReference type="PANTHER" id="PTHR43011:SF1">
    <property type="entry name" value="IRON-SULFUR CLUSTER ASSEMBLY 2 HOMOLOG, MITOCHONDRIAL"/>
    <property type="match status" value="1"/>
</dbReference>
<dbReference type="Pfam" id="PF01521">
    <property type="entry name" value="Fe-S_biosyn"/>
    <property type="match status" value="1"/>
</dbReference>
<dbReference type="SUPFAM" id="SSF89360">
    <property type="entry name" value="HesB-like domain"/>
    <property type="match status" value="1"/>
</dbReference>
<dbReference type="PROSITE" id="PS01152">
    <property type="entry name" value="HESB"/>
    <property type="match status" value="1"/>
</dbReference>
<reference key="1">
    <citation type="journal article" date="2010" name="PLoS Genet.">
        <title>Genome sequence of the plant growth promoting endophytic bacterium Enterobacter sp. 638.</title>
        <authorList>
            <person name="Taghavi S."/>
            <person name="van der Lelie D."/>
            <person name="Hoffman A."/>
            <person name="Zhang Y.B."/>
            <person name="Walla M.D."/>
            <person name="Vangronsveld J."/>
            <person name="Newman L."/>
            <person name="Monchy S."/>
        </authorList>
    </citation>
    <scope>NUCLEOTIDE SEQUENCE [LARGE SCALE GENOMIC DNA]</scope>
    <source>
        <strain>638</strain>
    </source>
</reference>